<evidence type="ECO:0000250" key="1"/>
<evidence type="ECO:0000305" key="2"/>
<organism>
    <name type="scientific">Galago senegalensis</name>
    <name type="common">Northern lesser bushbaby</name>
    <name type="synonym">Senegal bushbaby</name>
    <dbReference type="NCBI Taxonomy" id="9465"/>
    <lineage>
        <taxon>Eukaryota</taxon>
        <taxon>Metazoa</taxon>
        <taxon>Chordata</taxon>
        <taxon>Craniata</taxon>
        <taxon>Vertebrata</taxon>
        <taxon>Euteleostomi</taxon>
        <taxon>Mammalia</taxon>
        <taxon>Eutheria</taxon>
        <taxon>Euarchontoglires</taxon>
        <taxon>Primates</taxon>
        <taxon>Strepsirrhini</taxon>
        <taxon>Lorisiformes</taxon>
        <taxon>Galagidae</taxon>
        <taxon>Galago</taxon>
    </lineage>
</organism>
<comment type="function">
    <text>Plays an important role in growth control. Its major role in stimulating body growth is to stimulate the liver and other tissues to secrete IGF1. It stimulates both the differentiation and proliferation of myoblasts. It also stimulates amino acid uptake and protein synthesis in muscle and other tissues.</text>
</comment>
<comment type="subcellular location">
    <subcellularLocation>
        <location>Secreted</location>
    </subcellularLocation>
</comment>
<comment type="similarity">
    <text evidence="2">Belongs to the somatotropin/prolactin family.</text>
</comment>
<feature type="signal peptide" evidence="1">
    <location>
        <begin position="1"/>
        <end position="26"/>
    </location>
</feature>
<feature type="chain" id="PRO_0000032984" description="Somatotropin">
    <location>
        <begin position="27"/>
        <end position="217"/>
    </location>
</feature>
<feature type="binding site" evidence="1">
    <location>
        <position position="46"/>
    </location>
    <ligand>
        <name>Zn(2+)</name>
        <dbReference type="ChEBI" id="CHEBI:29105"/>
    </ligand>
</feature>
<feature type="binding site" evidence="1">
    <location>
        <position position="199"/>
    </location>
    <ligand>
        <name>Zn(2+)</name>
        <dbReference type="ChEBI" id="CHEBI:29105"/>
    </ligand>
</feature>
<feature type="disulfide bond" evidence="1">
    <location>
        <begin position="79"/>
        <end position="190"/>
    </location>
</feature>
<feature type="disulfide bond" evidence="1">
    <location>
        <begin position="207"/>
        <end position="215"/>
    </location>
</feature>
<proteinExistence type="inferred from homology"/>
<dbReference type="EMBL" id="AF292938">
    <property type="protein sequence ID" value="AAG44952.1"/>
    <property type="molecule type" value="Genomic_DNA"/>
</dbReference>
<dbReference type="SMR" id="Q9GKA1"/>
<dbReference type="GO" id="GO:0005615">
    <property type="term" value="C:extracellular space"/>
    <property type="evidence" value="ECO:0007669"/>
    <property type="project" value="InterPro"/>
</dbReference>
<dbReference type="GO" id="GO:0008083">
    <property type="term" value="F:growth factor activity"/>
    <property type="evidence" value="ECO:0007669"/>
    <property type="project" value="TreeGrafter"/>
</dbReference>
<dbReference type="GO" id="GO:0005131">
    <property type="term" value="F:growth hormone receptor binding"/>
    <property type="evidence" value="ECO:0007669"/>
    <property type="project" value="InterPro"/>
</dbReference>
<dbReference type="GO" id="GO:0005179">
    <property type="term" value="F:hormone activity"/>
    <property type="evidence" value="ECO:0007669"/>
    <property type="project" value="UniProtKB-KW"/>
</dbReference>
<dbReference type="GO" id="GO:0046872">
    <property type="term" value="F:metal ion binding"/>
    <property type="evidence" value="ECO:0007669"/>
    <property type="project" value="UniProtKB-KW"/>
</dbReference>
<dbReference type="GO" id="GO:0048513">
    <property type="term" value="P:animal organ development"/>
    <property type="evidence" value="ECO:0007669"/>
    <property type="project" value="TreeGrafter"/>
</dbReference>
<dbReference type="GO" id="GO:0060396">
    <property type="term" value="P:growth hormone receptor signaling pathway"/>
    <property type="evidence" value="ECO:0007669"/>
    <property type="project" value="TreeGrafter"/>
</dbReference>
<dbReference type="GO" id="GO:0045927">
    <property type="term" value="P:positive regulation of growth"/>
    <property type="evidence" value="ECO:0007669"/>
    <property type="project" value="TreeGrafter"/>
</dbReference>
<dbReference type="GO" id="GO:0046427">
    <property type="term" value="P:positive regulation of receptor signaling pathway via JAK-STAT"/>
    <property type="evidence" value="ECO:0007669"/>
    <property type="project" value="TreeGrafter"/>
</dbReference>
<dbReference type="GO" id="GO:0031667">
    <property type="term" value="P:response to nutrient levels"/>
    <property type="evidence" value="ECO:0007669"/>
    <property type="project" value="TreeGrafter"/>
</dbReference>
<dbReference type="CDD" id="cd10285">
    <property type="entry name" value="somatotropin_like"/>
    <property type="match status" value="1"/>
</dbReference>
<dbReference type="FunFam" id="1.20.1250.10:FF:000002">
    <property type="entry name" value="Growth hormone"/>
    <property type="match status" value="1"/>
</dbReference>
<dbReference type="Gene3D" id="1.20.1250.10">
    <property type="match status" value="1"/>
</dbReference>
<dbReference type="InterPro" id="IPR009079">
    <property type="entry name" value="4_helix_cytokine-like_core"/>
</dbReference>
<dbReference type="InterPro" id="IPR034975">
    <property type="entry name" value="Somatotropin"/>
</dbReference>
<dbReference type="InterPro" id="IPR001400">
    <property type="entry name" value="Somatotropin/Prolactin"/>
</dbReference>
<dbReference type="InterPro" id="IPR018116">
    <property type="entry name" value="Somatotropin_CS"/>
</dbReference>
<dbReference type="PANTHER" id="PTHR11417:SF2">
    <property type="entry name" value="SOMATOTROPIN"/>
    <property type="match status" value="1"/>
</dbReference>
<dbReference type="PANTHER" id="PTHR11417">
    <property type="entry name" value="SOMATOTROPIN,PROLACTIN"/>
    <property type="match status" value="1"/>
</dbReference>
<dbReference type="Pfam" id="PF00103">
    <property type="entry name" value="Hormone_1"/>
    <property type="match status" value="1"/>
</dbReference>
<dbReference type="PRINTS" id="PR00836">
    <property type="entry name" value="SOMATOTROPIN"/>
</dbReference>
<dbReference type="SUPFAM" id="SSF47266">
    <property type="entry name" value="4-helical cytokines"/>
    <property type="match status" value="1"/>
</dbReference>
<dbReference type="PROSITE" id="PS00266">
    <property type="entry name" value="SOMATOTROPIN_1"/>
    <property type="match status" value="1"/>
</dbReference>
<dbReference type="PROSITE" id="PS00338">
    <property type="entry name" value="SOMATOTROPIN_2"/>
    <property type="match status" value="1"/>
</dbReference>
<gene>
    <name type="primary">GH1</name>
</gene>
<protein>
    <recommendedName>
        <fullName>Somatotropin</fullName>
    </recommendedName>
    <alternativeName>
        <fullName>Growth hormone</fullName>
    </alternativeName>
</protein>
<keyword id="KW-1015">Disulfide bond</keyword>
<keyword id="KW-0372">Hormone</keyword>
<keyword id="KW-0479">Metal-binding</keyword>
<keyword id="KW-0964">Secreted</keyword>
<keyword id="KW-0732">Signal</keyword>
<keyword id="KW-0862">Zinc</keyword>
<name>SOMA_GALSE</name>
<accession>Q9GKA1</accession>
<reference key="1">
    <citation type="journal article" date="2001" name="Mol. Biol. Evol.">
        <title>Bushbaby growth hormone is much more similar to nonprimate growth hormones than to rhesus monkey and human growth hormones.</title>
        <authorList>
            <person name="Adkins R.M."/>
            <person name="Nekrutenko A."/>
            <person name="Li W.-H."/>
        </authorList>
    </citation>
    <scope>NUCLEOTIDE SEQUENCE [GENOMIC DNA]</scope>
</reference>
<sequence length="217" mass="24481">MATGSHTTTLLLAVALLGLPWPQEAGAFPAMPLSSLFANAVLRAQHLHQLAADTYKEFERAYIPEGQRYSIQNTQAAFCFSETIPAPTGKDEAQQRSDMELLRFSLLLIQSWLGPVQLLSRVFTNSLVLGTLDRVYEKLKDLEEGIQALMRELEDGSPRVGQILKQTYDKFDTNLRSDDALLKNYGLLSCFKKDLHKAETYLRVMKCRRFVESSCAF</sequence>